<accession>Q4UUK2</accession>
<dbReference type="EC" id="2.3.2.6" evidence="1"/>
<dbReference type="EMBL" id="CP000050">
    <property type="protein sequence ID" value="AAY49271.1"/>
    <property type="molecule type" value="Genomic_DNA"/>
</dbReference>
<dbReference type="RefSeq" id="WP_011037133.1">
    <property type="nucleotide sequence ID" value="NZ_CP155948.1"/>
</dbReference>
<dbReference type="SMR" id="Q4UUK2"/>
<dbReference type="KEGG" id="xcb:XC_2216"/>
<dbReference type="HOGENOM" id="CLU_075045_0_0_6"/>
<dbReference type="Proteomes" id="UP000000420">
    <property type="component" value="Chromosome"/>
</dbReference>
<dbReference type="GO" id="GO:0005737">
    <property type="term" value="C:cytoplasm"/>
    <property type="evidence" value="ECO:0007669"/>
    <property type="project" value="UniProtKB-SubCell"/>
</dbReference>
<dbReference type="GO" id="GO:0008914">
    <property type="term" value="F:leucyl-tRNA--protein transferase activity"/>
    <property type="evidence" value="ECO:0007669"/>
    <property type="project" value="UniProtKB-UniRule"/>
</dbReference>
<dbReference type="GO" id="GO:0030163">
    <property type="term" value="P:protein catabolic process"/>
    <property type="evidence" value="ECO:0007669"/>
    <property type="project" value="UniProtKB-UniRule"/>
</dbReference>
<dbReference type="FunFam" id="3.30.70.3550:FF:000001">
    <property type="entry name" value="Leucyl/phenylalanyl-tRNA--protein transferase"/>
    <property type="match status" value="1"/>
</dbReference>
<dbReference type="FunFam" id="3.40.630.70:FF:000008">
    <property type="entry name" value="Leucyl/phenylalanyl-tRNA--protein transferase"/>
    <property type="match status" value="1"/>
</dbReference>
<dbReference type="Gene3D" id="3.40.630.70">
    <property type="entry name" value="Leucyl/phenylalanyl-tRNA-protein transferase, C-terminal domain"/>
    <property type="match status" value="1"/>
</dbReference>
<dbReference type="Gene3D" id="3.30.70.3550">
    <property type="entry name" value="Leucyl/phenylalanyl-tRNA-protein transferase, N-terminal domain"/>
    <property type="match status" value="1"/>
</dbReference>
<dbReference type="HAMAP" id="MF_00688">
    <property type="entry name" value="Leu_Phe_trans"/>
    <property type="match status" value="1"/>
</dbReference>
<dbReference type="InterPro" id="IPR016181">
    <property type="entry name" value="Acyl_CoA_acyltransferase"/>
</dbReference>
<dbReference type="InterPro" id="IPR004616">
    <property type="entry name" value="Leu/Phe-tRNA_Trfase"/>
</dbReference>
<dbReference type="InterPro" id="IPR042203">
    <property type="entry name" value="Leu/Phe-tRNA_Trfase_C"/>
</dbReference>
<dbReference type="InterPro" id="IPR042221">
    <property type="entry name" value="Leu/Phe-tRNA_Trfase_N"/>
</dbReference>
<dbReference type="NCBIfam" id="TIGR00667">
    <property type="entry name" value="aat"/>
    <property type="match status" value="1"/>
</dbReference>
<dbReference type="PANTHER" id="PTHR30098">
    <property type="entry name" value="LEUCYL/PHENYLALANYL-TRNA--PROTEIN TRANSFERASE"/>
    <property type="match status" value="1"/>
</dbReference>
<dbReference type="PANTHER" id="PTHR30098:SF2">
    <property type="entry name" value="LEUCYL_PHENYLALANYL-TRNA--PROTEIN TRANSFERASE"/>
    <property type="match status" value="1"/>
</dbReference>
<dbReference type="Pfam" id="PF03588">
    <property type="entry name" value="Leu_Phe_trans"/>
    <property type="match status" value="1"/>
</dbReference>
<dbReference type="SUPFAM" id="SSF55729">
    <property type="entry name" value="Acyl-CoA N-acyltransferases (Nat)"/>
    <property type="match status" value="1"/>
</dbReference>
<feature type="chain" id="PRO_0000258110" description="Leucyl/phenylalanyl-tRNA--protein transferase">
    <location>
        <begin position="1"/>
        <end position="249"/>
    </location>
</feature>
<feature type="region of interest" description="Disordered" evidence="2">
    <location>
        <begin position="1"/>
        <end position="21"/>
    </location>
</feature>
<organism>
    <name type="scientific">Xanthomonas campestris pv. campestris (strain 8004)</name>
    <dbReference type="NCBI Taxonomy" id="314565"/>
    <lineage>
        <taxon>Bacteria</taxon>
        <taxon>Pseudomonadati</taxon>
        <taxon>Pseudomonadota</taxon>
        <taxon>Gammaproteobacteria</taxon>
        <taxon>Lysobacterales</taxon>
        <taxon>Lysobacteraceae</taxon>
        <taxon>Xanthomonas</taxon>
    </lineage>
</organism>
<evidence type="ECO:0000255" key="1">
    <source>
        <dbReference type="HAMAP-Rule" id="MF_00688"/>
    </source>
</evidence>
<evidence type="ECO:0000256" key="2">
    <source>
        <dbReference type="SAM" id="MobiDB-lite"/>
    </source>
</evidence>
<proteinExistence type="inferred from homology"/>
<comment type="function">
    <text evidence="1">Functions in the N-end rule pathway of protein degradation where it conjugates Leu, Phe and, less efficiently, Met from aminoacyl-tRNAs to the N-termini of proteins containing an N-terminal arginine or lysine.</text>
</comment>
<comment type="catalytic activity">
    <reaction evidence="1">
        <text>N-terminal L-lysyl-[protein] + L-leucyl-tRNA(Leu) = N-terminal L-leucyl-L-lysyl-[protein] + tRNA(Leu) + H(+)</text>
        <dbReference type="Rhea" id="RHEA:12340"/>
        <dbReference type="Rhea" id="RHEA-COMP:9613"/>
        <dbReference type="Rhea" id="RHEA-COMP:9622"/>
        <dbReference type="Rhea" id="RHEA-COMP:12670"/>
        <dbReference type="Rhea" id="RHEA-COMP:12671"/>
        <dbReference type="ChEBI" id="CHEBI:15378"/>
        <dbReference type="ChEBI" id="CHEBI:65249"/>
        <dbReference type="ChEBI" id="CHEBI:78442"/>
        <dbReference type="ChEBI" id="CHEBI:78494"/>
        <dbReference type="ChEBI" id="CHEBI:133043"/>
        <dbReference type="EC" id="2.3.2.6"/>
    </reaction>
</comment>
<comment type="catalytic activity">
    <reaction evidence="1">
        <text>N-terminal L-arginyl-[protein] + L-leucyl-tRNA(Leu) = N-terminal L-leucyl-L-arginyl-[protein] + tRNA(Leu) + H(+)</text>
        <dbReference type="Rhea" id="RHEA:50416"/>
        <dbReference type="Rhea" id="RHEA-COMP:9613"/>
        <dbReference type="Rhea" id="RHEA-COMP:9622"/>
        <dbReference type="Rhea" id="RHEA-COMP:12672"/>
        <dbReference type="Rhea" id="RHEA-COMP:12673"/>
        <dbReference type="ChEBI" id="CHEBI:15378"/>
        <dbReference type="ChEBI" id="CHEBI:64719"/>
        <dbReference type="ChEBI" id="CHEBI:78442"/>
        <dbReference type="ChEBI" id="CHEBI:78494"/>
        <dbReference type="ChEBI" id="CHEBI:133044"/>
        <dbReference type="EC" id="2.3.2.6"/>
    </reaction>
</comment>
<comment type="catalytic activity">
    <reaction evidence="1">
        <text>L-phenylalanyl-tRNA(Phe) + an N-terminal L-alpha-aminoacyl-[protein] = an N-terminal L-phenylalanyl-L-alpha-aminoacyl-[protein] + tRNA(Phe)</text>
        <dbReference type="Rhea" id="RHEA:43632"/>
        <dbReference type="Rhea" id="RHEA-COMP:9668"/>
        <dbReference type="Rhea" id="RHEA-COMP:9699"/>
        <dbReference type="Rhea" id="RHEA-COMP:10636"/>
        <dbReference type="Rhea" id="RHEA-COMP:10637"/>
        <dbReference type="ChEBI" id="CHEBI:78442"/>
        <dbReference type="ChEBI" id="CHEBI:78531"/>
        <dbReference type="ChEBI" id="CHEBI:78597"/>
        <dbReference type="ChEBI" id="CHEBI:83561"/>
        <dbReference type="EC" id="2.3.2.6"/>
    </reaction>
</comment>
<comment type="subcellular location">
    <subcellularLocation>
        <location evidence="1">Cytoplasm</location>
    </subcellularLocation>
</comment>
<comment type="similarity">
    <text evidence="1">Belongs to the L/F-transferase family.</text>
</comment>
<reference key="1">
    <citation type="journal article" date="2005" name="Genome Res.">
        <title>Comparative and functional genomic analyses of the pathogenicity of phytopathogen Xanthomonas campestris pv. campestris.</title>
        <authorList>
            <person name="Qian W."/>
            <person name="Jia Y."/>
            <person name="Ren S.-X."/>
            <person name="He Y.-Q."/>
            <person name="Feng J.-X."/>
            <person name="Lu L.-F."/>
            <person name="Sun Q."/>
            <person name="Ying G."/>
            <person name="Tang D.-J."/>
            <person name="Tang H."/>
            <person name="Wu W."/>
            <person name="Hao P."/>
            <person name="Wang L."/>
            <person name="Jiang B.-L."/>
            <person name="Zeng S."/>
            <person name="Gu W.-Y."/>
            <person name="Lu G."/>
            <person name="Rong L."/>
            <person name="Tian Y."/>
            <person name="Yao Z."/>
            <person name="Fu G."/>
            <person name="Chen B."/>
            <person name="Fang R."/>
            <person name="Qiang B."/>
            <person name="Chen Z."/>
            <person name="Zhao G.-P."/>
            <person name="Tang J.-L."/>
            <person name="He C."/>
        </authorList>
    </citation>
    <scope>NUCLEOTIDE SEQUENCE [LARGE SCALE GENOMIC DNA]</scope>
    <source>
        <strain>8004</strain>
    </source>
</reference>
<keyword id="KW-0012">Acyltransferase</keyword>
<keyword id="KW-0963">Cytoplasm</keyword>
<keyword id="KW-0808">Transferase</keyword>
<gene>
    <name evidence="1" type="primary">aat</name>
    <name type="ordered locus">XC_2216</name>
</gene>
<name>LFTR_XANC8</name>
<sequence>MSRTLPHLLSSDPASPFPPAEHALREPDGLLAIGGDLHPQRLLNAYAHGIFPWFSDGQPLLWWSPNPRTVFRTDAIHLSSRFRRQLRTCTWTLRADTAFAQVIAACALSPRPGQDGTWITDQMQEAYLDLHRRGYAHSVEVFDGARLVGGIYGVAIGQMFFGESMFSGASGGSKIALAALAAELHGLGWPLIDAQVENPHLMRLGAQRLQREQFLQHVATQVALPEPPGSWTQRYGERHASALAGVRLT</sequence>
<protein>
    <recommendedName>
        <fullName evidence="1">Leucyl/phenylalanyl-tRNA--protein transferase</fullName>
        <ecNumber evidence="1">2.3.2.6</ecNumber>
    </recommendedName>
    <alternativeName>
        <fullName evidence="1">L/F-transferase</fullName>
    </alternativeName>
    <alternativeName>
        <fullName evidence="1">Leucyltransferase</fullName>
    </alternativeName>
    <alternativeName>
        <fullName evidence="1">Phenyalanyltransferase</fullName>
    </alternativeName>
</protein>